<feature type="chain" id="PRO_1000127282" description="HTH-type transcriptional regulator ArgP">
    <location>
        <begin position="1"/>
        <end position="297"/>
    </location>
</feature>
<feature type="domain" description="HTH lysR-type" evidence="1">
    <location>
        <begin position="4"/>
        <end position="60"/>
    </location>
</feature>
<feature type="DNA-binding region" description="H-T-H motif" evidence="1">
    <location>
        <begin position="21"/>
        <end position="40"/>
    </location>
</feature>
<keyword id="KW-0238">DNA-binding</keyword>
<keyword id="KW-0804">Transcription</keyword>
<keyword id="KW-0805">Transcription regulation</keyword>
<proteinExistence type="inferred from homology"/>
<comment type="function">
    <text evidence="1">Controls the transcription of genes involved in arginine and lysine metabolism.</text>
</comment>
<comment type="subunit">
    <text evidence="1">Homodimer.</text>
</comment>
<comment type="similarity">
    <text evidence="2">Belongs to the LysR transcriptional regulatory family.</text>
</comment>
<protein>
    <recommendedName>
        <fullName evidence="1">HTH-type transcriptional regulator ArgP</fullName>
    </recommendedName>
</protein>
<reference key="1">
    <citation type="journal article" date="2011" name="J. Bacteriol.">
        <title>Comparative genomics of 28 Salmonella enterica isolates: evidence for CRISPR-mediated adaptive sublineage evolution.</title>
        <authorList>
            <person name="Fricke W.F."/>
            <person name="Mammel M.K."/>
            <person name="McDermott P.F."/>
            <person name="Tartera C."/>
            <person name="White D.G."/>
            <person name="Leclerc J.E."/>
            <person name="Ravel J."/>
            <person name="Cebula T.A."/>
        </authorList>
    </citation>
    <scope>NUCLEOTIDE SEQUENCE [LARGE SCALE GENOMIC DNA]</scope>
    <source>
        <strain>SL476</strain>
    </source>
</reference>
<evidence type="ECO:0000255" key="1">
    <source>
        <dbReference type="HAMAP-Rule" id="MF_00513"/>
    </source>
</evidence>
<evidence type="ECO:0000305" key="2"/>
<name>ARGP_SALHS</name>
<organism>
    <name type="scientific">Salmonella heidelberg (strain SL476)</name>
    <dbReference type="NCBI Taxonomy" id="454169"/>
    <lineage>
        <taxon>Bacteria</taxon>
        <taxon>Pseudomonadati</taxon>
        <taxon>Pseudomonadota</taxon>
        <taxon>Gammaproteobacteria</taxon>
        <taxon>Enterobacterales</taxon>
        <taxon>Enterobacteriaceae</taxon>
        <taxon>Salmonella</taxon>
    </lineage>
</organism>
<dbReference type="EMBL" id="CP001120">
    <property type="protein sequence ID" value="ACF68503.1"/>
    <property type="molecule type" value="Genomic_DNA"/>
</dbReference>
<dbReference type="RefSeq" id="WP_000828345.1">
    <property type="nucleotide sequence ID" value="NC_011083.1"/>
</dbReference>
<dbReference type="SMR" id="B4THE6"/>
<dbReference type="GeneID" id="66757362"/>
<dbReference type="KEGG" id="seh:SeHA_C3299"/>
<dbReference type="HOGENOM" id="CLU_063829_0_0_6"/>
<dbReference type="Proteomes" id="UP000001866">
    <property type="component" value="Chromosome"/>
</dbReference>
<dbReference type="GO" id="GO:0003677">
    <property type="term" value="F:DNA binding"/>
    <property type="evidence" value="ECO:0007669"/>
    <property type="project" value="UniProtKB-UniRule"/>
</dbReference>
<dbReference type="GO" id="GO:0003700">
    <property type="term" value="F:DNA-binding transcription factor activity"/>
    <property type="evidence" value="ECO:0007669"/>
    <property type="project" value="UniProtKB-UniRule"/>
</dbReference>
<dbReference type="CDD" id="cd08428">
    <property type="entry name" value="PBP2_IciA_ArgP"/>
    <property type="match status" value="1"/>
</dbReference>
<dbReference type="FunFam" id="1.10.10.10:FF:000061">
    <property type="entry name" value="HTH-type transcriptional regulator ArgP"/>
    <property type="match status" value="1"/>
</dbReference>
<dbReference type="FunFam" id="3.40.190.290:FF:000002">
    <property type="entry name" value="HTH-type transcriptional regulator ArgP"/>
    <property type="match status" value="1"/>
</dbReference>
<dbReference type="Gene3D" id="3.40.190.290">
    <property type="match status" value="1"/>
</dbReference>
<dbReference type="Gene3D" id="1.10.10.10">
    <property type="entry name" value="Winged helix-like DNA-binding domain superfamily/Winged helix DNA-binding domain"/>
    <property type="match status" value="1"/>
</dbReference>
<dbReference type="HAMAP" id="MF_00513">
    <property type="entry name" value="HTH_type_ArgP"/>
    <property type="match status" value="1"/>
</dbReference>
<dbReference type="InterPro" id="IPR017685">
    <property type="entry name" value="ArgP"/>
</dbReference>
<dbReference type="InterPro" id="IPR023490">
    <property type="entry name" value="ArgP_gammaproteobact"/>
</dbReference>
<dbReference type="InterPro" id="IPR050176">
    <property type="entry name" value="LTTR"/>
</dbReference>
<dbReference type="InterPro" id="IPR005119">
    <property type="entry name" value="LysR_subst-bd"/>
</dbReference>
<dbReference type="InterPro" id="IPR000847">
    <property type="entry name" value="Tscrpt_reg_HTH_LysR"/>
</dbReference>
<dbReference type="InterPro" id="IPR036388">
    <property type="entry name" value="WH-like_DNA-bd_sf"/>
</dbReference>
<dbReference type="InterPro" id="IPR036390">
    <property type="entry name" value="WH_DNA-bd_sf"/>
</dbReference>
<dbReference type="NCBIfam" id="TIGR03298">
    <property type="entry name" value="argP"/>
    <property type="match status" value="1"/>
</dbReference>
<dbReference type="NCBIfam" id="NF002964">
    <property type="entry name" value="PRK03635.1"/>
    <property type="match status" value="1"/>
</dbReference>
<dbReference type="NCBIfam" id="NF009888">
    <property type="entry name" value="PRK13348.1"/>
    <property type="match status" value="1"/>
</dbReference>
<dbReference type="PANTHER" id="PTHR30579:SF2">
    <property type="entry name" value="HTH-TYPE TRANSCRIPTIONAL REGULATOR ARGP"/>
    <property type="match status" value="1"/>
</dbReference>
<dbReference type="PANTHER" id="PTHR30579">
    <property type="entry name" value="TRANSCRIPTIONAL REGULATOR"/>
    <property type="match status" value="1"/>
</dbReference>
<dbReference type="Pfam" id="PF00126">
    <property type="entry name" value="HTH_1"/>
    <property type="match status" value="1"/>
</dbReference>
<dbReference type="Pfam" id="PF03466">
    <property type="entry name" value="LysR_substrate"/>
    <property type="match status" value="1"/>
</dbReference>
<dbReference type="PRINTS" id="PR00039">
    <property type="entry name" value="HTHLYSR"/>
</dbReference>
<dbReference type="SUPFAM" id="SSF53850">
    <property type="entry name" value="Periplasmic binding protein-like II"/>
    <property type="match status" value="1"/>
</dbReference>
<dbReference type="SUPFAM" id="SSF46785">
    <property type="entry name" value="Winged helix' DNA-binding domain"/>
    <property type="match status" value="1"/>
</dbReference>
<dbReference type="PROSITE" id="PS50931">
    <property type="entry name" value="HTH_LYSR"/>
    <property type="match status" value="1"/>
</dbReference>
<accession>B4THE6</accession>
<sequence>MKRPDYRTLQALDAVIRERGFERAAQKLCITQSAVSQRIKQLENMFGQPLLVRTVPPRPTEQGQKLLALLRQVELLEEEWLGDEQTGSTPLLLSLAVNADSLATWLLPALAPVLADSPIRLNLQVEDETRTQERLRRGEVVGAVSIQHQALPSCLVDKLGALDYLFVASKPFAERYFPNGVTRSSLLKAPAVAFDHLDDMHQAFLQQNFDLPPGSVPCHIVNSSEAFVQLARQGTTCCMIPHLQIEKELESGELINLTPGLLQRRMLYWHRFAPESRMMRKVTDALLEYGHKVLRQD</sequence>
<gene>
    <name evidence="1" type="primary">argP</name>
    <name type="synonym">iciA</name>
    <name type="ordered locus">SeHA_C3299</name>
</gene>